<feature type="chain" id="PRO_0000417861" description="Uncharacterized protein RL12">
    <location>
        <begin position="1"/>
        <end position="414"/>
    </location>
</feature>
<feature type="transmembrane region" description="Helical" evidence="1">
    <location>
        <begin position="367"/>
        <end position="384"/>
    </location>
</feature>
<name>RL12_HCMVM</name>
<gene>
    <name type="primary">RL12</name>
</gene>
<sequence>MRVDRQKRNNFTYRQTVYIILTFYIVYRGKCNSTDTNNSTSTSDSTVSDTSVYSTPNLPSTFFTTLDTSTGSQISTTSNTISSTTNTLAASSITTLNTSTNTTSYTASTLTALSSTHTNSPILSNNATLYTTSLDNTTTDITSSESSINASTIHNTTYSPVTSIAVNCTVAANETNNSSSKNCQQDIGTIRVKSTTLTAEEGKNITIQGNSTWNCPNVVWYRHYNWSTHGHHIYPNRRYQTPTYQHKILTSHPICHPDVSSPAAYHDLCRSCNKTELRIYDLNTTNSGRYSRRCYKEYNHDGPHEDENFGLTVNPRNDTDNHTTPLCPRYVGTQSEEDEDDDYTLSTITNNNMRKTSHRDISHGTRTTWALTLICIACILLFFVRRALNKRYRPLRDDISESSFVVRYHPEHED</sequence>
<reference key="1">
    <citation type="journal article" date="2004" name="J. Gen. Virol.">
        <title>Genetic content of wild-type human cytomegalovirus.</title>
        <authorList>
            <person name="Dolan A."/>
            <person name="Cunningham C."/>
            <person name="Hector R.D."/>
            <person name="Hassan-Walker A.F."/>
            <person name="Lee L."/>
            <person name="Addison C."/>
            <person name="Dargan D.J."/>
            <person name="McGeoch D.J."/>
            <person name="Gatherer D."/>
            <person name="Emery V.C."/>
            <person name="Griffiths P.D."/>
            <person name="Sinzger C."/>
            <person name="McSharry B.P."/>
            <person name="Wilkinson G.W.G."/>
            <person name="Davison A.J."/>
        </authorList>
    </citation>
    <scope>NUCLEOTIDE SEQUENCE [LARGE SCALE GENOMIC DNA]</scope>
</reference>
<comment type="subcellular location">
    <subcellularLocation>
        <location evidence="2">Virion membrane</location>
        <topology evidence="2">Single-pass membrane protein</topology>
    </subcellularLocation>
</comment>
<proteinExistence type="predicted"/>
<accession>Q6SWD0</accession>
<accession>D2K3H0</accession>
<dbReference type="EMBL" id="AY446894">
    <property type="protein sequence ID" value="AAR31566.1"/>
    <property type="molecule type" value="Genomic_DNA"/>
</dbReference>
<dbReference type="RefSeq" id="YP_081460.1">
    <property type="nucleotide sequence ID" value="NC_006273.2"/>
</dbReference>
<dbReference type="DNASU" id="3077488"/>
<dbReference type="GeneID" id="3077488"/>
<dbReference type="KEGG" id="vg:3077488"/>
<dbReference type="Proteomes" id="UP000000938">
    <property type="component" value="Segment"/>
</dbReference>
<dbReference type="GO" id="GO:0016020">
    <property type="term" value="C:membrane"/>
    <property type="evidence" value="ECO:0007669"/>
    <property type="project" value="UniProtKB-KW"/>
</dbReference>
<dbReference type="GO" id="GO:0019031">
    <property type="term" value="C:viral envelope"/>
    <property type="evidence" value="ECO:0007669"/>
    <property type="project" value="UniProtKB-KW"/>
</dbReference>
<dbReference type="GO" id="GO:0055036">
    <property type="term" value="C:virion membrane"/>
    <property type="evidence" value="ECO:0007669"/>
    <property type="project" value="UniProtKB-SubCell"/>
</dbReference>
<organism>
    <name type="scientific">Human cytomegalovirus (strain Merlin)</name>
    <name type="common">HHV-5</name>
    <name type="synonym">Human herpesvirus 5</name>
    <dbReference type="NCBI Taxonomy" id="295027"/>
    <lineage>
        <taxon>Viruses</taxon>
        <taxon>Duplodnaviria</taxon>
        <taxon>Heunggongvirae</taxon>
        <taxon>Peploviricota</taxon>
        <taxon>Herviviricetes</taxon>
        <taxon>Herpesvirales</taxon>
        <taxon>Orthoherpesviridae</taxon>
        <taxon>Betaherpesvirinae</taxon>
        <taxon>Cytomegalovirus</taxon>
        <taxon>Cytomegalovirus humanbeta5</taxon>
        <taxon>Human cytomegalovirus</taxon>
    </lineage>
</organism>
<keyword id="KW-0472">Membrane</keyword>
<keyword id="KW-1185">Reference proteome</keyword>
<keyword id="KW-0812">Transmembrane</keyword>
<keyword id="KW-1133">Transmembrane helix</keyword>
<keyword id="KW-0261">Viral envelope protein</keyword>
<keyword id="KW-0946">Virion</keyword>
<protein>
    <recommendedName>
        <fullName>Uncharacterized protein RL12</fullName>
    </recommendedName>
</protein>
<organismHost>
    <name type="scientific">Homo sapiens</name>
    <name type="common">Human</name>
    <dbReference type="NCBI Taxonomy" id="9606"/>
</organismHost>
<evidence type="ECO:0000255" key="1"/>
<evidence type="ECO:0000305" key="2"/>